<gene>
    <name evidence="1" type="primary">fusA</name>
    <name type="ordered locus">plu0431</name>
</gene>
<protein>
    <recommendedName>
        <fullName evidence="1">Elongation factor G</fullName>
        <shortName evidence="1">EF-G</shortName>
    </recommendedName>
</protein>
<reference key="1">
    <citation type="journal article" date="2003" name="Nat. Biotechnol.">
        <title>The genome sequence of the entomopathogenic bacterium Photorhabdus luminescens.</title>
        <authorList>
            <person name="Duchaud E."/>
            <person name="Rusniok C."/>
            <person name="Frangeul L."/>
            <person name="Buchrieser C."/>
            <person name="Givaudan A."/>
            <person name="Taourit S."/>
            <person name="Bocs S."/>
            <person name="Boursaux-Eude C."/>
            <person name="Chandler M."/>
            <person name="Charles J.-F."/>
            <person name="Dassa E."/>
            <person name="Derose R."/>
            <person name="Derzelle S."/>
            <person name="Freyssinet G."/>
            <person name="Gaudriault S."/>
            <person name="Medigue C."/>
            <person name="Lanois A."/>
            <person name="Powell K."/>
            <person name="Siguier P."/>
            <person name="Vincent R."/>
            <person name="Wingate V."/>
            <person name="Zouine M."/>
            <person name="Glaser P."/>
            <person name="Boemare N."/>
            <person name="Danchin A."/>
            <person name="Kunst F."/>
        </authorList>
    </citation>
    <scope>NUCLEOTIDE SEQUENCE [LARGE SCALE GENOMIC DNA]</scope>
    <source>
        <strain>DSM 15139 / CIP 105565 / TT01</strain>
    </source>
</reference>
<feature type="chain" id="PRO_0000091175" description="Elongation factor G">
    <location>
        <begin position="1"/>
        <end position="702"/>
    </location>
</feature>
<feature type="domain" description="tr-type G">
    <location>
        <begin position="8"/>
        <end position="290"/>
    </location>
</feature>
<feature type="binding site" evidence="1">
    <location>
        <begin position="17"/>
        <end position="24"/>
    </location>
    <ligand>
        <name>GTP</name>
        <dbReference type="ChEBI" id="CHEBI:37565"/>
    </ligand>
</feature>
<feature type="binding site" evidence="1">
    <location>
        <begin position="88"/>
        <end position="92"/>
    </location>
    <ligand>
        <name>GTP</name>
        <dbReference type="ChEBI" id="CHEBI:37565"/>
    </ligand>
</feature>
<feature type="binding site" evidence="1">
    <location>
        <begin position="142"/>
        <end position="145"/>
    </location>
    <ligand>
        <name>GTP</name>
        <dbReference type="ChEBI" id="CHEBI:37565"/>
    </ligand>
</feature>
<comment type="function">
    <text evidence="1">Catalyzes the GTP-dependent ribosomal translocation step during translation elongation. During this step, the ribosome changes from the pre-translocational (PRE) to the post-translocational (POST) state as the newly formed A-site-bound peptidyl-tRNA and P-site-bound deacylated tRNA move to the P and E sites, respectively. Catalyzes the coordinated movement of the two tRNA molecules, the mRNA and conformational changes in the ribosome.</text>
</comment>
<comment type="subcellular location">
    <subcellularLocation>
        <location evidence="1">Cytoplasm</location>
    </subcellularLocation>
</comment>
<comment type="similarity">
    <text evidence="1">Belongs to the TRAFAC class translation factor GTPase superfamily. Classic translation factor GTPase family. EF-G/EF-2 subfamily.</text>
</comment>
<sequence>MARTTPIARYRNIGISAHIDAGKTTTTERILFYTGVNHKIGEVHDGAATMDWMEQEQERGITITSAATTAFWSGMAKQFDAHRINIIDTPGHVDFTIEVERSMRVLDGAVMVYCAVGGVQPQSETVWRQANKYRVPRIAFVNKMDRMGANFLRVVEQLKTRLAANPVPLQLAIGAEDAFTGVVDLVKMKAINWNDEDQGTTFTYEDIPADMQDLAEEWRSNLIEAAAEASEELMEKYLGGEELTEEEIKAGLRHRVLTNEIILVTCGSAFKNKGVQAMLDAVIEYLPAPTDVESIKGILPDGKDTSAERHSDDNEPFSALAFKIATDPFVGNLTFFRVYSGVVNSGDTVLNPVKDRKERFGRIVQMHANKREEIKEVRAGDIAAAIGLKDVTTGDTLCDINAPIILERMEFPEPVISVAIEPKTKADQEKMGIALGRLAQEDPSFRVSTDEESGQTIIAGMGELHLDVLVDRMRREFKVEANVGKPQVAYRETIRSTVEQEGKFVRQSGGRGQFGHVWLRIEPMEPGGVGYEFANEIVGGVVPKEYIPAVDKGIQEQMKNGVLAGYPIVDVKVALFDGSYHEVDSSEMAFKIAGSMGFKEGFMKAKPALLEPIMKVEVETPEDYMGDVIGDLNRRRGMIDGMEDMTTGKIVRAQVPLSEMFGYATDLRSQTQGRASYSMEFLKYNEAPSNVAQAIIEARKAK</sequence>
<evidence type="ECO:0000255" key="1">
    <source>
        <dbReference type="HAMAP-Rule" id="MF_00054"/>
    </source>
</evidence>
<dbReference type="EMBL" id="BX571860">
    <property type="protein sequence ID" value="CAE12726.1"/>
    <property type="molecule type" value="Genomic_DNA"/>
</dbReference>
<dbReference type="RefSeq" id="WP_011144817.1">
    <property type="nucleotide sequence ID" value="NC_005126.1"/>
</dbReference>
<dbReference type="SMR" id="Q7N9B2"/>
<dbReference type="STRING" id="243265.plu0431"/>
<dbReference type="GeneID" id="48846717"/>
<dbReference type="KEGG" id="plu:plu0431"/>
<dbReference type="eggNOG" id="COG0480">
    <property type="taxonomic scope" value="Bacteria"/>
</dbReference>
<dbReference type="HOGENOM" id="CLU_002794_4_1_6"/>
<dbReference type="OrthoDB" id="9804431at2"/>
<dbReference type="Proteomes" id="UP000002514">
    <property type="component" value="Chromosome"/>
</dbReference>
<dbReference type="GO" id="GO:0005737">
    <property type="term" value="C:cytoplasm"/>
    <property type="evidence" value="ECO:0007669"/>
    <property type="project" value="UniProtKB-SubCell"/>
</dbReference>
<dbReference type="GO" id="GO:0005525">
    <property type="term" value="F:GTP binding"/>
    <property type="evidence" value="ECO:0007669"/>
    <property type="project" value="UniProtKB-UniRule"/>
</dbReference>
<dbReference type="GO" id="GO:0003924">
    <property type="term" value="F:GTPase activity"/>
    <property type="evidence" value="ECO:0007669"/>
    <property type="project" value="InterPro"/>
</dbReference>
<dbReference type="GO" id="GO:0097216">
    <property type="term" value="F:guanosine tetraphosphate binding"/>
    <property type="evidence" value="ECO:0007669"/>
    <property type="project" value="UniProtKB-ARBA"/>
</dbReference>
<dbReference type="GO" id="GO:0003746">
    <property type="term" value="F:translation elongation factor activity"/>
    <property type="evidence" value="ECO:0007669"/>
    <property type="project" value="UniProtKB-UniRule"/>
</dbReference>
<dbReference type="GO" id="GO:0032790">
    <property type="term" value="P:ribosome disassembly"/>
    <property type="evidence" value="ECO:0007669"/>
    <property type="project" value="TreeGrafter"/>
</dbReference>
<dbReference type="CDD" id="cd01886">
    <property type="entry name" value="EF-G"/>
    <property type="match status" value="1"/>
</dbReference>
<dbReference type="CDD" id="cd16262">
    <property type="entry name" value="EFG_III"/>
    <property type="match status" value="1"/>
</dbReference>
<dbReference type="CDD" id="cd01434">
    <property type="entry name" value="EFG_mtEFG1_IV"/>
    <property type="match status" value="1"/>
</dbReference>
<dbReference type="CDD" id="cd03713">
    <property type="entry name" value="EFG_mtEFG_C"/>
    <property type="match status" value="1"/>
</dbReference>
<dbReference type="CDD" id="cd04088">
    <property type="entry name" value="EFG_mtEFG_II"/>
    <property type="match status" value="1"/>
</dbReference>
<dbReference type="FunFam" id="2.40.30.10:FF:000006">
    <property type="entry name" value="Elongation factor G"/>
    <property type="match status" value="1"/>
</dbReference>
<dbReference type="FunFam" id="3.30.230.10:FF:000003">
    <property type="entry name" value="Elongation factor G"/>
    <property type="match status" value="1"/>
</dbReference>
<dbReference type="FunFam" id="3.30.70.240:FF:000001">
    <property type="entry name" value="Elongation factor G"/>
    <property type="match status" value="1"/>
</dbReference>
<dbReference type="FunFam" id="3.30.70.870:FF:000001">
    <property type="entry name" value="Elongation factor G"/>
    <property type="match status" value="1"/>
</dbReference>
<dbReference type="FunFam" id="3.40.50.300:FF:000029">
    <property type="entry name" value="Elongation factor G"/>
    <property type="match status" value="1"/>
</dbReference>
<dbReference type="Gene3D" id="3.30.230.10">
    <property type="match status" value="1"/>
</dbReference>
<dbReference type="Gene3D" id="3.30.70.240">
    <property type="match status" value="1"/>
</dbReference>
<dbReference type="Gene3D" id="3.30.70.870">
    <property type="entry name" value="Elongation Factor G (Translational Gtpase), domain 3"/>
    <property type="match status" value="1"/>
</dbReference>
<dbReference type="Gene3D" id="3.40.50.300">
    <property type="entry name" value="P-loop containing nucleotide triphosphate hydrolases"/>
    <property type="match status" value="1"/>
</dbReference>
<dbReference type="Gene3D" id="2.40.30.10">
    <property type="entry name" value="Translation factors"/>
    <property type="match status" value="1"/>
</dbReference>
<dbReference type="HAMAP" id="MF_00054_B">
    <property type="entry name" value="EF_G_EF_2_B"/>
    <property type="match status" value="1"/>
</dbReference>
<dbReference type="InterPro" id="IPR041095">
    <property type="entry name" value="EFG_II"/>
</dbReference>
<dbReference type="InterPro" id="IPR009022">
    <property type="entry name" value="EFG_III"/>
</dbReference>
<dbReference type="InterPro" id="IPR035647">
    <property type="entry name" value="EFG_III/V"/>
</dbReference>
<dbReference type="InterPro" id="IPR047872">
    <property type="entry name" value="EFG_IV"/>
</dbReference>
<dbReference type="InterPro" id="IPR035649">
    <property type="entry name" value="EFG_V"/>
</dbReference>
<dbReference type="InterPro" id="IPR000640">
    <property type="entry name" value="EFG_V-like"/>
</dbReference>
<dbReference type="InterPro" id="IPR004161">
    <property type="entry name" value="EFTu-like_2"/>
</dbReference>
<dbReference type="InterPro" id="IPR031157">
    <property type="entry name" value="G_TR_CS"/>
</dbReference>
<dbReference type="InterPro" id="IPR027417">
    <property type="entry name" value="P-loop_NTPase"/>
</dbReference>
<dbReference type="InterPro" id="IPR020568">
    <property type="entry name" value="Ribosomal_Su5_D2-typ_SF"/>
</dbReference>
<dbReference type="InterPro" id="IPR014721">
    <property type="entry name" value="Ribsml_uS5_D2-typ_fold_subgr"/>
</dbReference>
<dbReference type="InterPro" id="IPR005225">
    <property type="entry name" value="Small_GTP-bd"/>
</dbReference>
<dbReference type="InterPro" id="IPR000795">
    <property type="entry name" value="T_Tr_GTP-bd_dom"/>
</dbReference>
<dbReference type="InterPro" id="IPR009000">
    <property type="entry name" value="Transl_B-barrel_sf"/>
</dbReference>
<dbReference type="InterPro" id="IPR004540">
    <property type="entry name" value="Transl_elong_EFG/EF2"/>
</dbReference>
<dbReference type="InterPro" id="IPR005517">
    <property type="entry name" value="Transl_elong_EFG/EF2_IV"/>
</dbReference>
<dbReference type="NCBIfam" id="TIGR00484">
    <property type="entry name" value="EF-G"/>
    <property type="match status" value="1"/>
</dbReference>
<dbReference type="NCBIfam" id="NF009381">
    <property type="entry name" value="PRK12740.1-5"/>
    <property type="match status" value="1"/>
</dbReference>
<dbReference type="NCBIfam" id="TIGR00231">
    <property type="entry name" value="small_GTP"/>
    <property type="match status" value="1"/>
</dbReference>
<dbReference type="PANTHER" id="PTHR43261:SF1">
    <property type="entry name" value="RIBOSOME-RELEASING FACTOR 2, MITOCHONDRIAL"/>
    <property type="match status" value="1"/>
</dbReference>
<dbReference type="PANTHER" id="PTHR43261">
    <property type="entry name" value="TRANSLATION ELONGATION FACTOR G-RELATED"/>
    <property type="match status" value="1"/>
</dbReference>
<dbReference type="Pfam" id="PF00679">
    <property type="entry name" value="EFG_C"/>
    <property type="match status" value="1"/>
</dbReference>
<dbReference type="Pfam" id="PF14492">
    <property type="entry name" value="EFG_III"/>
    <property type="match status" value="1"/>
</dbReference>
<dbReference type="Pfam" id="PF03764">
    <property type="entry name" value="EFG_IV"/>
    <property type="match status" value="1"/>
</dbReference>
<dbReference type="Pfam" id="PF00009">
    <property type="entry name" value="GTP_EFTU"/>
    <property type="match status" value="1"/>
</dbReference>
<dbReference type="Pfam" id="PF03144">
    <property type="entry name" value="GTP_EFTU_D2"/>
    <property type="match status" value="1"/>
</dbReference>
<dbReference type="PRINTS" id="PR00315">
    <property type="entry name" value="ELONGATNFCT"/>
</dbReference>
<dbReference type="SMART" id="SM00838">
    <property type="entry name" value="EFG_C"/>
    <property type="match status" value="1"/>
</dbReference>
<dbReference type="SMART" id="SM00889">
    <property type="entry name" value="EFG_IV"/>
    <property type="match status" value="1"/>
</dbReference>
<dbReference type="SUPFAM" id="SSF54980">
    <property type="entry name" value="EF-G C-terminal domain-like"/>
    <property type="match status" value="2"/>
</dbReference>
<dbReference type="SUPFAM" id="SSF52540">
    <property type="entry name" value="P-loop containing nucleoside triphosphate hydrolases"/>
    <property type="match status" value="1"/>
</dbReference>
<dbReference type="SUPFAM" id="SSF54211">
    <property type="entry name" value="Ribosomal protein S5 domain 2-like"/>
    <property type="match status" value="1"/>
</dbReference>
<dbReference type="SUPFAM" id="SSF50447">
    <property type="entry name" value="Translation proteins"/>
    <property type="match status" value="1"/>
</dbReference>
<dbReference type="PROSITE" id="PS00301">
    <property type="entry name" value="G_TR_1"/>
    <property type="match status" value="1"/>
</dbReference>
<dbReference type="PROSITE" id="PS51722">
    <property type="entry name" value="G_TR_2"/>
    <property type="match status" value="1"/>
</dbReference>
<proteinExistence type="inferred from homology"/>
<keyword id="KW-0963">Cytoplasm</keyword>
<keyword id="KW-0251">Elongation factor</keyword>
<keyword id="KW-0342">GTP-binding</keyword>
<keyword id="KW-0547">Nucleotide-binding</keyword>
<keyword id="KW-0648">Protein biosynthesis</keyword>
<keyword id="KW-1185">Reference proteome</keyword>
<accession>Q7N9B2</accession>
<name>EFG_PHOLL</name>
<organism>
    <name type="scientific">Photorhabdus laumondii subsp. laumondii (strain DSM 15139 / CIP 105565 / TT01)</name>
    <name type="common">Photorhabdus luminescens subsp. laumondii</name>
    <dbReference type="NCBI Taxonomy" id="243265"/>
    <lineage>
        <taxon>Bacteria</taxon>
        <taxon>Pseudomonadati</taxon>
        <taxon>Pseudomonadota</taxon>
        <taxon>Gammaproteobacteria</taxon>
        <taxon>Enterobacterales</taxon>
        <taxon>Morganellaceae</taxon>
        <taxon>Photorhabdus</taxon>
    </lineage>
</organism>